<organism>
    <name type="scientific">Fowlpox virus (strain NVSL)</name>
    <name type="common">FPV</name>
    <dbReference type="NCBI Taxonomy" id="928301"/>
    <lineage>
        <taxon>Viruses</taxon>
        <taxon>Varidnaviria</taxon>
        <taxon>Bamfordvirae</taxon>
        <taxon>Nucleocytoviricota</taxon>
        <taxon>Pokkesviricetes</taxon>
        <taxon>Chitovirales</taxon>
        <taxon>Poxviridae</taxon>
        <taxon>Chordopoxvirinae</taxon>
        <taxon>Avipoxvirus</taxon>
        <taxon>Fowlpox virus</taxon>
    </lineage>
</organism>
<keyword id="KW-1185">Reference proteome</keyword>
<reference key="1">
    <citation type="journal article" date="2000" name="J. Virol.">
        <title>The genome of fowlpox virus.</title>
        <authorList>
            <person name="Afonso C.L."/>
            <person name="Tulman E.R."/>
            <person name="Lu Z."/>
            <person name="Zsak L."/>
            <person name="Kutish G.F."/>
            <person name="Rock D.L."/>
        </authorList>
    </citation>
    <scope>NUCLEOTIDE SEQUENCE [LARGE SCALE GENOMIC DNA]</scope>
</reference>
<gene>
    <name type="ordered locus">FPV042</name>
</gene>
<sequence length="85" mass="9560">MKLFFYLLIVYKKYYSSGGDIETAYNCLISFRLLAVSYVLSSLILEHLGNRIDILEAVWVEDLVNSDPIISHTGANEISEIITSG</sequence>
<dbReference type="EMBL" id="AF198100">
    <property type="protein sequence ID" value="AAF44386.1"/>
    <property type="molecule type" value="Genomic_DNA"/>
</dbReference>
<dbReference type="RefSeq" id="NP_039005.1">
    <property type="nucleotide sequence ID" value="NC_002188.1"/>
</dbReference>
<dbReference type="GeneID" id="1486590"/>
<dbReference type="KEGG" id="vg:1486590"/>
<dbReference type="Proteomes" id="UP000008597">
    <property type="component" value="Segment"/>
</dbReference>
<accession>Q9J5G1</accession>
<name>V042_FOWPN</name>
<organismHost>
    <name type="scientific">Vertebrata</name>
    <dbReference type="NCBI Taxonomy" id="7742"/>
</organismHost>
<feature type="chain" id="PRO_0000099728" description="Uncharacterized protein FPV042">
    <location>
        <begin position="1"/>
        <end position="85"/>
    </location>
</feature>
<protein>
    <recommendedName>
        <fullName>Uncharacterized protein FPV042</fullName>
    </recommendedName>
</protein>
<proteinExistence type="predicted"/>